<reference evidence="6" key="1">
    <citation type="journal article" date="2012" name="PLoS ONE">
        <title>Peptidomics of the agriculturally damaging larval stage of the cabbage root fly Delia radicum (Diptera: Anthomyiidae).</title>
        <authorList>
            <person name="Zoephel J."/>
            <person name="Reiher W."/>
            <person name="Rexer K.-H."/>
            <person name="Kahnt J."/>
            <person name="Wegener C."/>
        </authorList>
    </citation>
    <scope>PROTEIN SEQUENCE</scope>
    <scope>TISSUE SPECIFICITY</scope>
    <scope>DEVELOPMENTAL STAGE</scope>
    <scope>MASS SPECTROMETRY</scope>
    <scope>AMIDATION AT PHE-10</scope>
    <source>
        <tissue evidence="4">CNS</tissue>
    </source>
</reference>
<proteinExistence type="evidence at protein level"/>
<evidence type="ECO:0000250" key="1">
    <source>
        <dbReference type="UniProtKB" id="P41855"/>
    </source>
</evidence>
<evidence type="ECO:0000250" key="2">
    <source>
        <dbReference type="UniProtKB" id="P41856"/>
    </source>
</evidence>
<evidence type="ECO:0000255" key="3"/>
<evidence type="ECO:0000269" key="4">
    <source>
    </source>
</evidence>
<evidence type="ECO:0000303" key="5">
    <source>
    </source>
</evidence>
<evidence type="ECO:0000305" key="6"/>
<protein>
    <recommendedName>
        <fullName evidence="5">FMRFamide-like neuropeptide SAQGQDFMRF-amide</fullName>
    </recommendedName>
</protein>
<name>FAR10_DELRA</name>
<feature type="peptide" id="PRO_0000419710" description="FMRFamide-like neuropeptide SAQGQDFMRF-amide" evidence="4">
    <location>
        <begin position="1"/>
        <end position="10"/>
    </location>
</feature>
<feature type="modified residue" description="Phenylalanine amide" evidence="4">
    <location>
        <position position="10"/>
    </location>
</feature>
<feature type="unsure residue" description="Q or K" evidence="4">
    <location>
        <position position="3"/>
    </location>
</feature>
<comment type="function">
    <text evidence="1">FMRFamides and FMRFamide-like peptides are neuropeptides.</text>
</comment>
<comment type="subcellular location">
    <subcellularLocation>
        <location evidence="2">Secreted</location>
    </subcellularLocation>
</comment>
<comment type="tissue specificity">
    <text evidence="4">Expressed in the CNS and thoracic perisympathetic organs (tPSO) but not in the ring gland, midgut or abdominal perisympathetic organs (aPSO) (at protein level).</text>
</comment>
<comment type="developmental stage">
    <text evidence="4">Detected in larvae.</text>
</comment>
<comment type="mass spectrometry"/>
<comment type="similarity">
    <text evidence="3">Belongs to the FARP (FMRFamide related peptide) family.</text>
</comment>
<sequence>SAQGQDFMRF</sequence>
<dbReference type="GO" id="GO:0005576">
    <property type="term" value="C:extracellular region"/>
    <property type="evidence" value="ECO:0007669"/>
    <property type="project" value="UniProtKB-SubCell"/>
</dbReference>
<dbReference type="GO" id="GO:0007218">
    <property type="term" value="P:neuropeptide signaling pathway"/>
    <property type="evidence" value="ECO:0007669"/>
    <property type="project" value="UniProtKB-KW"/>
</dbReference>
<accession>B3EWK8</accession>
<organism>
    <name type="scientific">Delia radicum</name>
    <name type="common">Cabbage root fly</name>
    <name type="synonym">Anthomyia brassicae</name>
    <dbReference type="NCBI Taxonomy" id="30064"/>
    <lineage>
        <taxon>Eukaryota</taxon>
        <taxon>Metazoa</taxon>
        <taxon>Ecdysozoa</taxon>
        <taxon>Arthropoda</taxon>
        <taxon>Hexapoda</taxon>
        <taxon>Insecta</taxon>
        <taxon>Pterygota</taxon>
        <taxon>Neoptera</taxon>
        <taxon>Endopterygota</taxon>
        <taxon>Diptera</taxon>
        <taxon>Brachycera</taxon>
        <taxon>Muscomorpha</taxon>
        <taxon>Muscoidea</taxon>
        <taxon>Anthomyiidae</taxon>
        <taxon>Anthomyiinae</taxon>
        <taxon>Delia</taxon>
    </lineage>
</organism>
<keyword id="KW-0027">Amidation</keyword>
<keyword id="KW-0903">Direct protein sequencing</keyword>
<keyword id="KW-0527">Neuropeptide</keyword>
<keyword id="KW-0964">Secreted</keyword>